<reference key="1">
    <citation type="journal article" date="2008" name="DNA Res.">
        <title>Complete genome sequence of Finegoldia magna, an anaerobic opportunistic pathogen.</title>
        <authorList>
            <person name="Goto T."/>
            <person name="Yamashita A."/>
            <person name="Hirakawa H."/>
            <person name="Matsutani M."/>
            <person name="Todo K."/>
            <person name="Ohshima K."/>
            <person name="Toh H."/>
            <person name="Miyamoto K."/>
            <person name="Kuhara S."/>
            <person name="Hattori M."/>
            <person name="Shimizu T."/>
            <person name="Akimoto S."/>
        </authorList>
    </citation>
    <scope>NUCLEOTIDE SEQUENCE [LARGE SCALE GENOMIC DNA]</scope>
    <source>
        <strain>ATCC 29328 / DSM 20472 / WAL 2508</strain>
    </source>
</reference>
<gene>
    <name evidence="1" type="primary">miaA</name>
    <name type="ordered locus">FMG_0745</name>
</gene>
<name>MIAA_FINM2</name>
<evidence type="ECO:0000255" key="1">
    <source>
        <dbReference type="HAMAP-Rule" id="MF_00185"/>
    </source>
</evidence>
<feature type="chain" id="PRO_1000098665" description="tRNA dimethylallyltransferase">
    <location>
        <begin position="1"/>
        <end position="314"/>
    </location>
</feature>
<feature type="region of interest" description="Interaction with substrate tRNA" evidence="1">
    <location>
        <begin position="35"/>
        <end position="38"/>
    </location>
</feature>
<feature type="binding site" evidence="1">
    <location>
        <begin position="10"/>
        <end position="17"/>
    </location>
    <ligand>
        <name>ATP</name>
        <dbReference type="ChEBI" id="CHEBI:30616"/>
    </ligand>
</feature>
<feature type="binding site" evidence="1">
    <location>
        <begin position="12"/>
        <end position="17"/>
    </location>
    <ligand>
        <name>substrate</name>
    </ligand>
</feature>
<feature type="site" description="Interaction with substrate tRNA" evidence="1">
    <location>
        <position position="101"/>
    </location>
</feature>
<feature type="site" description="Interaction with substrate tRNA" evidence="1">
    <location>
        <position position="124"/>
    </location>
</feature>
<proteinExistence type="inferred from homology"/>
<accession>B0S1C3</accession>
<keyword id="KW-0067">ATP-binding</keyword>
<keyword id="KW-0460">Magnesium</keyword>
<keyword id="KW-0547">Nucleotide-binding</keyword>
<keyword id="KW-1185">Reference proteome</keyword>
<keyword id="KW-0808">Transferase</keyword>
<keyword id="KW-0819">tRNA processing</keyword>
<sequence>MRKKCIVIVGPTGVGKTRLSIFLAKRLSSEIISADSMQIYKYMDIGTAKVEPKYQRVIKHHLIDIVEPYENFNVEQFKNLCIEKIEEISSKNKIPIIVGGTGLYINSITHKLEFNAVKSDDKLREELENISLQYGNEKLHEILEDIDPKSADKIHMNNVRRVIRAIEVCKLTGHKFSEINDKFDHYNDDYDFYIIGLNDDRQVLYERINKRVDEMIDEGFMAECKYIYEMTDENSQSIQAIGYREAFMYLNNKISFKDMISLMKKNSRKYAKRQLTWFRQDKRIHWMNLKDFREFEDIEQICLKNVKEWLYDKR</sequence>
<dbReference type="EC" id="2.5.1.75" evidence="1"/>
<dbReference type="EMBL" id="AP008971">
    <property type="protein sequence ID" value="BAG08163.1"/>
    <property type="molecule type" value="Genomic_DNA"/>
</dbReference>
<dbReference type="RefSeq" id="WP_002838371.1">
    <property type="nucleotide sequence ID" value="NC_010376.1"/>
</dbReference>
<dbReference type="SMR" id="B0S1C3"/>
<dbReference type="STRING" id="334413.FMG_0745"/>
<dbReference type="KEGG" id="fma:FMG_0745"/>
<dbReference type="eggNOG" id="COG0324">
    <property type="taxonomic scope" value="Bacteria"/>
</dbReference>
<dbReference type="HOGENOM" id="CLU_032616_0_1_9"/>
<dbReference type="Proteomes" id="UP000001319">
    <property type="component" value="Chromosome"/>
</dbReference>
<dbReference type="GO" id="GO:0005524">
    <property type="term" value="F:ATP binding"/>
    <property type="evidence" value="ECO:0007669"/>
    <property type="project" value="UniProtKB-UniRule"/>
</dbReference>
<dbReference type="GO" id="GO:0052381">
    <property type="term" value="F:tRNA dimethylallyltransferase activity"/>
    <property type="evidence" value="ECO:0007669"/>
    <property type="project" value="UniProtKB-UniRule"/>
</dbReference>
<dbReference type="GO" id="GO:0006400">
    <property type="term" value="P:tRNA modification"/>
    <property type="evidence" value="ECO:0007669"/>
    <property type="project" value="TreeGrafter"/>
</dbReference>
<dbReference type="Gene3D" id="1.10.20.140">
    <property type="match status" value="1"/>
</dbReference>
<dbReference type="Gene3D" id="3.40.50.300">
    <property type="entry name" value="P-loop containing nucleotide triphosphate hydrolases"/>
    <property type="match status" value="1"/>
</dbReference>
<dbReference type="HAMAP" id="MF_00185">
    <property type="entry name" value="IPP_trans"/>
    <property type="match status" value="1"/>
</dbReference>
<dbReference type="InterPro" id="IPR039657">
    <property type="entry name" value="Dimethylallyltransferase"/>
</dbReference>
<dbReference type="InterPro" id="IPR018022">
    <property type="entry name" value="IPT"/>
</dbReference>
<dbReference type="InterPro" id="IPR027417">
    <property type="entry name" value="P-loop_NTPase"/>
</dbReference>
<dbReference type="NCBIfam" id="TIGR00174">
    <property type="entry name" value="miaA"/>
    <property type="match status" value="1"/>
</dbReference>
<dbReference type="PANTHER" id="PTHR11088">
    <property type="entry name" value="TRNA DIMETHYLALLYLTRANSFERASE"/>
    <property type="match status" value="1"/>
</dbReference>
<dbReference type="PANTHER" id="PTHR11088:SF60">
    <property type="entry name" value="TRNA DIMETHYLALLYLTRANSFERASE"/>
    <property type="match status" value="1"/>
</dbReference>
<dbReference type="Pfam" id="PF01715">
    <property type="entry name" value="IPPT"/>
    <property type="match status" value="1"/>
</dbReference>
<dbReference type="SUPFAM" id="SSF52540">
    <property type="entry name" value="P-loop containing nucleoside triphosphate hydrolases"/>
    <property type="match status" value="2"/>
</dbReference>
<organism>
    <name type="scientific">Finegoldia magna (strain ATCC 29328 / DSM 20472 / WAL 2508)</name>
    <name type="common">Peptostreptococcus magnus</name>
    <dbReference type="NCBI Taxonomy" id="334413"/>
    <lineage>
        <taxon>Bacteria</taxon>
        <taxon>Bacillati</taxon>
        <taxon>Bacillota</taxon>
        <taxon>Tissierellia</taxon>
        <taxon>Tissierellales</taxon>
        <taxon>Peptoniphilaceae</taxon>
        <taxon>Finegoldia</taxon>
    </lineage>
</organism>
<comment type="function">
    <text evidence="1">Catalyzes the transfer of a dimethylallyl group onto the adenine at position 37 in tRNAs that read codons beginning with uridine, leading to the formation of N6-(dimethylallyl)adenosine (i(6)A).</text>
</comment>
<comment type="catalytic activity">
    <reaction evidence="1">
        <text>adenosine(37) in tRNA + dimethylallyl diphosphate = N(6)-dimethylallyladenosine(37) in tRNA + diphosphate</text>
        <dbReference type="Rhea" id="RHEA:26482"/>
        <dbReference type="Rhea" id="RHEA-COMP:10162"/>
        <dbReference type="Rhea" id="RHEA-COMP:10375"/>
        <dbReference type="ChEBI" id="CHEBI:33019"/>
        <dbReference type="ChEBI" id="CHEBI:57623"/>
        <dbReference type="ChEBI" id="CHEBI:74411"/>
        <dbReference type="ChEBI" id="CHEBI:74415"/>
        <dbReference type="EC" id="2.5.1.75"/>
    </reaction>
</comment>
<comment type="cofactor">
    <cofactor evidence="1">
        <name>Mg(2+)</name>
        <dbReference type="ChEBI" id="CHEBI:18420"/>
    </cofactor>
</comment>
<comment type="subunit">
    <text evidence="1">Monomer.</text>
</comment>
<comment type="similarity">
    <text evidence="1">Belongs to the IPP transferase family.</text>
</comment>
<protein>
    <recommendedName>
        <fullName evidence="1">tRNA dimethylallyltransferase</fullName>
        <ecNumber evidence="1">2.5.1.75</ecNumber>
    </recommendedName>
    <alternativeName>
        <fullName evidence="1">Dimethylallyl diphosphate:tRNA dimethylallyltransferase</fullName>
        <shortName evidence="1">DMAPP:tRNA dimethylallyltransferase</shortName>
        <shortName evidence="1">DMATase</shortName>
    </alternativeName>
    <alternativeName>
        <fullName evidence="1">Isopentenyl-diphosphate:tRNA isopentenyltransferase</fullName>
        <shortName evidence="1">IPP transferase</shortName>
        <shortName evidence="1">IPPT</shortName>
        <shortName evidence="1">IPTase</shortName>
    </alternativeName>
</protein>